<proteinExistence type="inferred from homology"/>
<accession>Q2ITQ2</accession>
<name>PURL_RHOP2</name>
<evidence type="ECO:0000255" key="1">
    <source>
        <dbReference type="HAMAP-Rule" id="MF_00420"/>
    </source>
</evidence>
<feature type="chain" id="PRO_1000050342" description="Phosphoribosylformylglycinamidine synthase subunit PurL">
    <location>
        <begin position="1"/>
        <end position="736"/>
    </location>
</feature>
<feature type="active site" evidence="1">
    <location>
        <position position="49"/>
    </location>
</feature>
<feature type="active site" description="Proton acceptor" evidence="1">
    <location>
        <position position="95"/>
    </location>
</feature>
<feature type="binding site" evidence="1">
    <location>
        <position position="52"/>
    </location>
    <ligand>
        <name>ATP</name>
        <dbReference type="ChEBI" id="CHEBI:30616"/>
    </ligand>
</feature>
<feature type="binding site" evidence="1">
    <location>
        <position position="91"/>
    </location>
    <ligand>
        <name>ATP</name>
        <dbReference type="ChEBI" id="CHEBI:30616"/>
    </ligand>
</feature>
<feature type="binding site" evidence="1">
    <location>
        <position position="93"/>
    </location>
    <ligand>
        <name>Mg(2+)</name>
        <dbReference type="ChEBI" id="CHEBI:18420"/>
        <label>1</label>
    </ligand>
</feature>
<feature type="binding site" evidence="1">
    <location>
        <begin position="94"/>
        <end position="97"/>
    </location>
    <ligand>
        <name>substrate</name>
    </ligand>
</feature>
<feature type="binding site" evidence="1">
    <location>
        <position position="116"/>
    </location>
    <ligand>
        <name>substrate</name>
    </ligand>
</feature>
<feature type="binding site" evidence="1">
    <location>
        <position position="117"/>
    </location>
    <ligand>
        <name>Mg(2+)</name>
        <dbReference type="ChEBI" id="CHEBI:18420"/>
        <label>2</label>
    </ligand>
</feature>
<feature type="binding site" evidence="1">
    <location>
        <position position="240"/>
    </location>
    <ligand>
        <name>substrate</name>
    </ligand>
</feature>
<feature type="binding site" evidence="1">
    <location>
        <position position="268"/>
    </location>
    <ligand>
        <name>Mg(2+)</name>
        <dbReference type="ChEBI" id="CHEBI:18420"/>
        <label>2</label>
    </ligand>
</feature>
<feature type="binding site" evidence="1">
    <location>
        <begin position="312"/>
        <end position="314"/>
    </location>
    <ligand>
        <name>substrate</name>
    </ligand>
</feature>
<feature type="binding site" evidence="1">
    <location>
        <position position="493"/>
    </location>
    <ligand>
        <name>ATP</name>
        <dbReference type="ChEBI" id="CHEBI:30616"/>
    </ligand>
</feature>
<feature type="binding site" evidence="1">
    <location>
        <position position="530"/>
    </location>
    <ligand>
        <name>ATP</name>
        <dbReference type="ChEBI" id="CHEBI:30616"/>
    </ligand>
</feature>
<feature type="binding site" evidence="1">
    <location>
        <position position="531"/>
    </location>
    <ligand>
        <name>Mg(2+)</name>
        <dbReference type="ChEBI" id="CHEBI:18420"/>
        <label>1</label>
    </ligand>
</feature>
<feature type="binding site" evidence="1">
    <location>
        <position position="533"/>
    </location>
    <ligand>
        <name>substrate</name>
    </ligand>
</feature>
<organism>
    <name type="scientific">Rhodopseudomonas palustris (strain HaA2)</name>
    <dbReference type="NCBI Taxonomy" id="316058"/>
    <lineage>
        <taxon>Bacteria</taxon>
        <taxon>Pseudomonadati</taxon>
        <taxon>Pseudomonadota</taxon>
        <taxon>Alphaproteobacteria</taxon>
        <taxon>Hyphomicrobiales</taxon>
        <taxon>Nitrobacteraceae</taxon>
        <taxon>Rhodopseudomonas</taxon>
    </lineage>
</organism>
<protein>
    <recommendedName>
        <fullName evidence="1">Phosphoribosylformylglycinamidine synthase subunit PurL</fullName>
        <shortName evidence="1">FGAM synthase</shortName>
        <ecNumber evidence="1">6.3.5.3</ecNumber>
    </recommendedName>
    <alternativeName>
        <fullName evidence="1">Formylglycinamide ribonucleotide amidotransferase subunit II</fullName>
        <shortName evidence="1">FGAR amidotransferase II</shortName>
        <shortName evidence="1">FGAR-AT II</shortName>
    </alternativeName>
    <alternativeName>
        <fullName evidence="1">Glutamine amidotransferase PurL</fullName>
    </alternativeName>
    <alternativeName>
        <fullName evidence="1">Phosphoribosylformylglycinamidine synthase subunit II</fullName>
    </alternativeName>
</protein>
<gene>
    <name evidence="1" type="primary">purL</name>
    <name type="ordered locus">RPB_3713</name>
</gene>
<sequence>MSAPEPKITPELIASHGLKPDEYQRILDLIGREPTFTELGIFSAMWNEHCSYKSSRIHLKGLPTKAPWVLQGPGENAGVIDIGDNQAVVFKMESHNHPSYIEPYQGATTGVGGILRDVFTMGARPIACLNALSFGDPSHPKTRHLVSGVVAGVGGYGNSFGVPTVGGQTRFHTRYDGNILVNAMAVGLADSDKIFLAAASGVGMPIVYLGSKTGRDGMGGATMASAEFDEGSEEKRPTVQVGDPFAEKLLLEACLEIMAKDCVIAIQDMGAAGLTCSAVEMGAKGDLGVDLDLDAVPTRETGMTAYEMMLSESQERMLMVLKPEKEKEAEEIFRKWGLDFAIVGYTTPTKRFVVKHGGAVKADLPIKELGDEAPLYDRPHVPSPKLPVIHAREVNAPMPVPEALEKLLATPDLCSKRWVWEQYDHVIGGNTLQRPGGDAAVVRVEDGPKGLALTVDVTPRYCEADPYEGGKQAVAEAYRNITAVGGKPLAITDNLNFGNPERPEIMGQLVGCLKGISEACIALDSPIVSGNVSLYNETSGRGILPTPSIGGVGLLDDFTKSATLAFKAEGEAILLIGETHGWLGQSVYLRDVCGREEGAPPPVDLACEKRHGDVVRGMIHAGTATAVHDLSDGGLLVALAEMAISGNIGASLDAPPDSTVAHAWWFGEDQGRYLVTVKEDDLLTVLSKLKSVGVPCTQIGTTGGHTLKIDGERAIDVKALRHAHEHWLPDYMAGKN</sequence>
<comment type="function">
    <text evidence="1">Part of the phosphoribosylformylglycinamidine synthase complex involved in the purines biosynthetic pathway. Catalyzes the ATP-dependent conversion of formylglycinamide ribonucleotide (FGAR) and glutamine to yield formylglycinamidine ribonucleotide (FGAM) and glutamate. The FGAM synthase complex is composed of three subunits. PurQ produces an ammonia molecule by converting glutamine to glutamate. PurL transfers the ammonia molecule to FGAR to form FGAM in an ATP-dependent manner. PurS interacts with PurQ and PurL and is thought to assist in the transfer of the ammonia molecule from PurQ to PurL.</text>
</comment>
<comment type="catalytic activity">
    <reaction evidence="1">
        <text>N(2)-formyl-N(1)-(5-phospho-beta-D-ribosyl)glycinamide + L-glutamine + ATP + H2O = 2-formamido-N(1)-(5-O-phospho-beta-D-ribosyl)acetamidine + L-glutamate + ADP + phosphate + H(+)</text>
        <dbReference type="Rhea" id="RHEA:17129"/>
        <dbReference type="ChEBI" id="CHEBI:15377"/>
        <dbReference type="ChEBI" id="CHEBI:15378"/>
        <dbReference type="ChEBI" id="CHEBI:29985"/>
        <dbReference type="ChEBI" id="CHEBI:30616"/>
        <dbReference type="ChEBI" id="CHEBI:43474"/>
        <dbReference type="ChEBI" id="CHEBI:58359"/>
        <dbReference type="ChEBI" id="CHEBI:147286"/>
        <dbReference type="ChEBI" id="CHEBI:147287"/>
        <dbReference type="ChEBI" id="CHEBI:456216"/>
        <dbReference type="EC" id="6.3.5.3"/>
    </reaction>
</comment>
<comment type="pathway">
    <text evidence="1">Purine metabolism; IMP biosynthesis via de novo pathway; 5-amino-1-(5-phospho-D-ribosyl)imidazole from N(2)-formyl-N(1)-(5-phospho-D-ribosyl)glycinamide: step 1/2.</text>
</comment>
<comment type="subunit">
    <text evidence="1">Monomer. Part of the FGAM synthase complex composed of 1 PurL, 1 PurQ and 2 PurS subunits.</text>
</comment>
<comment type="subcellular location">
    <subcellularLocation>
        <location evidence="1">Cytoplasm</location>
    </subcellularLocation>
</comment>
<comment type="similarity">
    <text evidence="1">Belongs to the FGAMS family.</text>
</comment>
<dbReference type="EC" id="6.3.5.3" evidence="1"/>
<dbReference type="EMBL" id="CP000250">
    <property type="protein sequence ID" value="ABD08408.1"/>
    <property type="molecule type" value="Genomic_DNA"/>
</dbReference>
<dbReference type="RefSeq" id="WP_011442592.1">
    <property type="nucleotide sequence ID" value="NC_007778.1"/>
</dbReference>
<dbReference type="SMR" id="Q2ITQ2"/>
<dbReference type="STRING" id="316058.RPB_3713"/>
<dbReference type="KEGG" id="rpb:RPB_3713"/>
<dbReference type="eggNOG" id="COG0046">
    <property type="taxonomic scope" value="Bacteria"/>
</dbReference>
<dbReference type="HOGENOM" id="CLU_003100_0_1_5"/>
<dbReference type="OrthoDB" id="9804441at2"/>
<dbReference type="UniPathway" id="UPA00074">
    <property type="reaction ID" value="UER00128"/>
</dbReference>
<dbReference type="Proteomes" id="UP000008809">
    <property type="component" value="Chromosome"/>
</dbReference>
<dbReference type="GO" id="GO:0005737">
    <property type="term" value="C:cytoplasm"/>
    <property type="evidence" value="ECO:0007669"/>
    <property type="project" value="UniProtKB-SubCell"/>
</dbReference>
<dbReference type="GO" id="GO:0005524">
    <property type="term" value="F:ATP binding"/>
    <property type="evidence" value="ECO:0007669"/>
    <property type="project" value="UniProtKB-UniRule"/>
</dbReference>
<dbReference type="GO" id="GO:0000287">
    <property type="term" value="F:magnesium ion binding"/>
    <property type="evidence" value="ECO:0007669"/>
    <property type="project" value="UniProtKB-UniRule"/>
</dbReference>
<dbReference type="GO" id="GO:0004642">
    <property type="term" value="F:phosphoribosylformylglycinamidine synthase activity"/>
    <property type="evidence" value="ECO:0007669"/>
    <property type="project" value="UniProtKB-UniRule"/>
</dbReference>
<dbReference type="GO" id="GO:0006189">
    <property type="term" value="P:'de novo' IMP biosynthetic process"/>
    <property type="evidence" value="ECO:0007669"/>
    <property type="project" value="UniProtKB-UniRule"/>
</dbReference>
<dbReference type="CDD" id="cd02203">
    <property type="entry name" value="PurL_repeat1"/>
    <property type="match status" value="1"/>
</dbReference>
<dbReference type="CDD" id="cd02204">
    <property type="entry name" value="PurL_repeat2"/>
    <property type="match status" value="1"/>
</dbReference>
<dbReference type="FunFam" id="3.30.1330.10:FF:000004">
    <property type="entry name" value="Phosphoribosylformylglycinamidine synthase subunit PurL"/>
    <property type="match status" value="1"/>
</dbReference>
<dbReference type="Gene3D" id="3.90.650.10">
    <property type="entry name" value="PurM-like C-terminal domain"/>
    <property type="match status" value="2"/>
</dbReference>
<dbReference type="Gene3D" id="3.30.1330.10">
    <property type="entry name" value="PurM-like, N-terminal domain"/>
    <property type="match status" value="2"/>
</dbReference>
<dbReference type="HAMAP" id="MF_00420">
    <property type="entry name" value="PurL_2"/>
    <property type="match status" value="1"/>
</dbReference>
<dbReference type="InterPro" id="IPR010074">
    <property type="entry name" value="PRibForGlyAmidine_synth_PurL"/>
</dbReference>
<dbReference type="InterPro" id="IPR041609">
    <property type="entry name" value="PurL_linker"/>
</dbReference>
<dbReference type="InterPro" id="IPR010918">
    <property type="entry name" value="PurM-like_C_dom"/>
</dbReference>
<dbReference type="InterPro" id="IPR036676">
    <property type="entry name" value="PurM-like_C_sf"/>
</dbReference>
<dbReference type="InterPro" id="IPR016188">
    <property type="entry name" value="PurM-like_N"/>
</dbReference>
<dbReference type="InterPro" id="IPR036921">
    <property type="entry name" value="PurM-like_N_sf"/>
</dbReference>
<dbReference type="NCBIfam" id="TIGR01736">
    <property type="entry name" value="FGAM_synth_II"/>
    <property type="match status" value="1"/>
</dbReference>
<dbReference type="NCBIfam" id="NF002290">
    <property type="entry name" value="PRK01213.1"/>
    <property type="match status" value="1"/>
</dbReference>
<dbReference type="PANTHER" id="PTHR43555">
    <property type="entry name" value="PHOSPHORIBOSYLFORMYLGLYCINAMIDINE SYNTHASE SUBUNIT PURL"/>
    <property type="match status" value="1"/>
</dbReference>
<dbReference type="PANTHER" id="PTHR43555:SF1">
    <property type="entry name" value="PHOSPHORIBOSYLFORMYLGLYCINAMIDINE SYNTHASE SUBUNIT PURL"/>
    <property type="match status" value="1"/>
</dbReference>
<dbReference type="Pfam" id="PF00586">
    <property type="entry name" value="AIRS"/>
    <property type="match status" value="2"/>
</dbReference>
<dbReference type="Pfam" id="PF02769">
    <property type="entry name" value="AIRS_C"/>
    <property type="match status" value="2"/>
</dbReference>
<dbReference type="Pfam" id="PF18072">
    <property type="entry name" value="FGAR-AT_linker"/>
    <property type="match status" value="1"/>
</dbReference>
<dbReference type="PIRSF" id="PIRSF001587">
    <property type="entry name" value="FGAM_synthase_II"/>
    <property type="match status" value="1"/>
</dbReference>
<dbReference type="SUPFAM" id="SSF56042">
    <property type="entry name" value="PurM C-terminal domain-like"/>
    <property type="match status" value="2"/>
</dbReference>
<dbReference type="SUPFAM" id="SSF55326">
    <property type="entry name" value="PurM N-terminal domain-like"/>
    <property type="match status" value="2"/>
</dbReference>
<reference key="1">
    <citation type="submission" date="2006-01" db="EMBL/GenBank/DDBJ databases">
        <title>Complete sequence of Rhodopseudomonas palustris HaA2.</title>
        <authorList>
            <consortium name="US DOE Joint Genome Institute"/>
            <person name="Copeland A."/>
            <person name="Lucas S."/>
            <person name="Lapidus A."/>
            <person name="Barry K."/>
            <person name="Detter J.C."/>
            <person name="Glavina T."/>
            <person name="Hammon N."/>
            <person name="Israni S."/>
            <person name="Pitluck S."/>
            <person name="Chain P."/>
            <person name="Malfatti S."/>
            <person name="Shin M."/>
            <person name="Vergez L."/>
            <person name="Schmutz J."/>
            <person name="Larimer F."/>
            <person name="Land M."/>
            <person name="Hauser L."/>
            <person name="Pelletier D.A."/>
            <person name="Kyrpides N."/>
            <person name="Anderson I."/>
            <person name="Oda Y."/>
            <person name="Harwood C.S."/>
            <person name="Richardson P."/>
        </authorList>
    </citation>
    <scope>NUCLEOTIDE SEQUENCE [LARGE SCALE GENOMIC DNA]</scope>
    <source>
        <strain>HaA2</strain>
    </source>
</reference>
<keyword id="KW-0067">ATP-binding</keyword>
<keyword id="KW-0963">Cytoplasm</keyword>
<keyword id="KW-0436">Ligase</keyword>
<keyword id="KW-0460">Magnesium</keyword>
<keyword id="KW-0479">Metal-binding</keyword>
<keyword id="KW-0547">Nucleotide-binding</keyword>
<keyword id="KW-0658">Purine biosynthesis</keyword>
<keyword id="KW-1185">Reference proteome</keyword>